<feature type="chain" id="PRO_0000408453" description="Protein U3">
    <location>
        <begin position="1"/>
        <end position="386"/>
    </location>
</feature>
<accession>Q9QJ56</accession>
<name>VU3_HHV6Z</name>
<reference key="1">
    <citation type="journal article" date="1999" name="J. Virol.">
        <title>Human herpesvirus 6B genome sequence: coding content and comparison with human herpesvirus 6A.</title>
        <authorList>
            <person name="Dominguez G."/>
            <person name="Dambaugh T.R."/>
            <person name="Stamey F.R."/>
            <person name="Dewhurst S."/>
            <person name="Inoue N."/>
            <person name="Pellett P.E."/>
        </authorList>
    </citation>
    <scope>NUCLEOTIDE SEQUENCE [LARGE SCALE GENOMIC DNA]</scope>
</reference>
<dbReference type="EMBL" id="AF157706">
    <property type="protein sequence ID" value="AAD49622.1"/>
    <property type="molecule type" value="Genomic_DNA"/>
</dbReference>
<dbReference type="RefSeq" id="NP_050185.1">
    <property type="nucleotide sequence ID" value="NC_000898.1"/>
</dbReference>
<dbReference type="DNASU" id="1497006"/>
<dbReference type="GeneID" id="1497006"/>
<dbReference type="KEGG" id="vg:1497006"/>
<dbReference type="Proteomes" id="UP000006930">
    <property type="component" value="Segment"/>
</dbReference>
<dbReference type="InterPro" id="IPR003360">
    <property type="entry name" value="US22-like"/>
</dbReference>
<dbReference type="Pfam" id="PF02393">
    <property type="entry name" value="US22"/>
    <property type="match status" value="1"/>
</dbReference>
<keyword id="KW-1185">Reference proteome</keyword>
<organism>
    <name type="scientific">Human herpesvirus 6B (strain Z29)</name>
    <name type="common">HHV-6 variant B</name>
    <name type="synonym">Human B lymphotropic virus</name>
    <dbReference type="NCBI Taxonomy" id="36351"/>
    <lineage>
        <taxon>Viruses</taxon>
        <taxon>Duplodnaviria</taxon>
        <taxon>Heunggongvirae</taxon>
        <taxon>Peploviricota</taxon>
        <taxon>Herviviricetes</taxon>
        <taxon>Herpesvirales</taxon>
        <taxon>Orthoherpesviridae</taxon>
        <taxon>Betaherpesvirinae</taxon>
        <taxon>Roseolovirus</taxon>
        <taxon>Roseolovirus humanbeta6b</taxon>
        <taxon>Human herpesvirus 6B</taxon>
    </lineage>
</organism>
<gene>
    <name type="primary">U3</name>
</gene>
<organismHost>
    <name type="scientific">Homo sapiens</name>
    <name type="common">Human</name>
    <dbReference type="NCBI Taxonomy" id="9606"/>
</organismHost>
<protein>
    <recommendedName>
        <fullName>Protein U3</fullName>
    </recommendedName>
</protein>
<sequence>METTNSRRVSSAQRQILATATVRFIEGLHEPAQDSMMCGDDELQSQERMKKRQRLYNKSKRDLVDLLRVYTCLNSVRMFTFVNFGRRIPLAWPEGYELVINNCRDENEYADEKLGELADLVCCRERLVVLGYVKKRGEIGSEPAYWFLKGDIVVLLGGAGRVYAHTWLLPQQLCRVGDTIDDFLRKGLKRFYYAHQLVSSLQFVVEDTEVDGVCSCRDVLCFRDRHIGRSFALRWPKNETLLFHRRRDSFVFVRCDEARRRLAEMCFFGSFGYKYFADAGRISLYVADDGRIFGFNDNDEDGRPRFVAENFQQFRRIGVIQYYKSYVFRREQPEWALLPTCHLSRMFYQKTWRQADEDLLFVKARNDERQEFPDAGTRSAVHDVVR</sequence>
<proteinExistence type="predicted"/>